<sequence>MHCPFCNAADSKVIDSRLAAEGCQIRRRRECISCGERFTTFESYEVVMPRVIKSNGKNEPFDEAKLRRSLMHALQKRPVTQEQIEAVLSDIQLKIRRLGERDVKSRMIGEIVMQALFALDHVAYVRFASVYQDFQDVEAFRRQIEQMQQREQECEKHDV</sequence>
<accession>Q6FFE5</accession>
<dbReference type="EMBL" id="CR543861">
    <property type="protein sequence ID" value="CAG67212.1"/>
    <property type="molecule type" value="Genomic_DNA"/>
</dbReference>
<dbReference type="RefSeq" id="WP_004920757.1">
    <property type="nucleotide sequence ID" value="NC_005966.1"/>
</dbReference>
<dbReference type="SMR" id="Q6FFE5"/>
<dbReference type="STRING" id="202950.GCA_001485005_00521"/>
<dbReference type="GeneID" id="45232761"/>
<dbReference type="KEGG" id="aci:ACIAD0246"/>
<dbReference type="eggNOG" id="COG1327">
    <property type="taxonomic scope" value="Bacteria"/>
</dbReference>
<dbReference type="HOGENOM" id="CLU_108412_0_0_6"/>
<dbReference type="OrthoDB" id="9807461at2"/>
<dbReference type="BioCyc" id="ASP62977:ACIAD_RS01160-MONOMER"/>
<dbReference type="Proteomes" id="UP000000430">
    <property type="component" value="Chromosome"/>
</dbReference>
<dbReference type="GO" id="GO:0005524">
    <property type="term" value="F:ATP binding"/>
    <property type="evidence" value="ECO:0007669"/>
    <property type="project" value="UniProtKB-KW"/>
</dbReference>
<dbReference type="GO" id="GO:0003677">
    <property type="term" value="F:DNA binding"/>
    <property type="evidence" value="ECO:0007669"/>
    <property type="project" value="UniProtKB-KW"/>
</dbReference>
<dbReference type="GO" id="GO:0008270">
    <property type="term" value="F:zinc ion binding"/>
    <property type="evidence" value="ECO:0007669"/>
    <property type="project" value="UniProtKB-UniRule"/>
</dbReference>
<dbReference type="GO" id="GO:0045892">
    <property type="term" value="P:negative regulation of DNA-templated transcription"/>
    <property type="evidence" value="ECO:0007669"/>
    <property type="project" value="UniProtKB-UniRule"/>
</dbReference>
<dbReference type="HAMAP" id="MF_00440">
    <property type="entry name" value="NrdR"/>
    <property type="match status" value="1"/>
</dbReference>
<dbReference type="InterPro" id="IPR005144">
    <property type="entry name" value="ATP-cone_dom"/>
</dbReference>
<dbReference type="InterPro" id="IPR055173">
    <property type="entry name" value="NrdR-like_N"/>
</dbReference>
<dbReference type="InterPro" id="IPR003796">
    <property type="entry name" value="RNR_NrdR-like"/>
</dbReference>
<dbReference type="NCBIfam" id="TIGR00244">
    <property type="entry name" value="transcriptional regulator NrdR"/>
    <property type="match status" value="1"/>
</dbReference>
<dbReference type="PANTHER" id="PTHR30455">
    <property type="entry name" value="TRANSCRIPTIONAL REPRESSOR NRDR"/>
    <property type="match status" value="1"/>
</dbReference>
<dbReference type="PANTHER" id="PTHR30455:SF2">
    <property type="entry name" value="TRANSCRIPTIONAL REPRESSOR NRDR"/>
    <property type="match status" value="1"/>
</dbReference>
<dbReference type="Pfam" id="PF03477">
    <property type="entry name" value="ATP-cone"/>
    <property type="match status" value="1"/>
</dbReference>
<dbReference type="Pfam" id="PF22811">
    <property type="entry name" value="Zn_ribbon_NrdR"/>
    <property type="match status" value="1"/>
</dbReference>
<dbReference type="PROSITE" id="PS51161">
    <property type="entry name" value="ATP_CONE"/>
    <property type="match status" value="1"/>
</dbReference>
<feature type="chain" id="PRO_0000182258" description="Transcriptional repressor NrdR">
    <location>
        <begin position="1"/>
        <end position="159"/>
    </location>
</feature>
<feature type="domain" description="ATP-cone" evidence="1">
    <location>
        <begin position="49"/>
        <end position="139"/>
    </location>
</feature>
<feature type="zinc finger region" evidence="1">
    <location>
        <begin position="3"/>
        <end position="34"/>
    </location>
</feature>
<protein>
    <recommendedName>
        <fullName evidence="1">Transcriptional repressor NrdR</fullName>
    </recommendedName>
</protein>
<keyword id="KW-0067">ATP-binding</keyword>
<keyword id="KW-0238">DNA-binding</keyword>
<keyword id="KW-0479">Metal-binding</keyword>
<keyword id="KW-0547">Nucleotide-binding</keyword>
<keyword id="KW-0678">Repressor</keyword>
<keyword id="KW-0804">Transcription</keyword>
<keyword id="KW-0805">Transcription regulation</keyword>
<keyword id="KW-0862">Zinc</keyword>
<keyword id="KW-0863">Zinc-finger</keyword>
<comment type="function">
    <text evidence="1">Negatively regulates transcription of bacterial ribonucleotide reductase nrd genes and operons by binding to NrdR-boxes.</text>
</comment>
<comment type="cofactor">
    <cofactor evidence="1">
        <name>Zn(2+)</name>
        <dbReference type="ChEBI" id="CHEBI:29105"/>
    </cofactor>
    <text evidence="1">Binds 1 zinc ion.</text>
</comment>
<comment type="similarity">
    <text evidence="1">Belongs to the NrdR family.</text>
</comment>
<gene>
    <name evidence="1" type="primary">nrdR</name>
    <name type="ordered locus">ACIAD0246</name>
</gene>
<name>NRDR_ACIAD</name>
<evidence type="ECO:0000255" key="1">
    <source>
        <dbReference type="HAMAP-Rule" id="MF_00440"/>
    </source>
</evidence>
<organism>
    <name type="scientific">Acinetobacter baylyi (strain ATCC 33305 / BD413 / ADP1)</name>
    <dbReference type="NCBI Taxonomy" id="62977"/>
    <lineage>
        <taxon>Bacteria</taxon>
        <taxon>Pseudomonadati</taxon>
        <taxon>Pseudomonadota</taxon>
        <taxon>Gammaproteobacteria</taxon>
        <taxon>Moraxellales</taxon>
        <taxon>Moraxellaceae</taxon>
        <taxon>Acinetobacter</taxon>
    </lineage>
</organism>
<proteinExistence type="inferred from homology"/>
<reference key="1">
    <citation type="journal article" date="2004" name="Nucleic Acids Res.">
        <title>Unique features revealed by the genome sequence of Acinetobacter sp. ADP1, a versatile and naturally transformation competent bacterium.</title>
        <authorList>
            <person name="Barbe V."/>
            <person name="Vallenet D."/>
            <person name="Fonknechten N."/>
            <person name="Kreimeyer A."/>
            <person name="Oztas S."/>
            <person name="Labarre L."/>
            <person name="Cruveiller S."/>
            <person name="Robert C."/>
            <person name="Duprat S."/>
            <person name="Wincker P."/>
            <person name="Ornston L.N."/>
            <person name="Weissenbach J."/>
            <person name="Marliere P."/>
            <person name="Cohen G.N."/>
            <person name="Medigue C."/>
        </authorList>
    </citation>
    <scope>NUCLEOTIDE SEQUENCE [LARGE SCALE GENOMIC DNA]</scope>
    <source>
        <strain>ATCC 33305 / BD413 / ADP1</strain>
    </source>
</reference>